<keyword id="KW-0560">Oxidoreductase</keyword>
<keyword id="KW-1185">Reference proteome</keyword>
<reference key="1">
    <citation type="journal article" date="2005" name="Science">
        <title>The transcriptional landscape of the mammalian genome.</title>
        <authorList>
            <person name="Carninci P."/>
            <person name="Kasukawa T."/>
            <person name="Katayama S."/>
            <person name="Gough J."/>
            <person name="Frith M.C."/>
            <person name="Maeda N."/>
            <person name="Oyama R."/>
            <person name="Ravasi T."/>
            <person name="Lenhard B."/>
            <person name="Wells C."/>
            <person name="Kodzius R."/>
            <person name="Shimokawa K."/>
            <person name="Bajic V.B."/>
            <person name="Brenner S.E."/>
            <person name="Batalov S."/>
            <person name="Forrest A.R."/>
            <person name="Zavolan M."/>
            <person name="Davis M.J."/>
            <person name="Wilming L.G."/>
            <person name="Aidinis V."/>
            <person name="Allen J.E."/>
            <person name="Ambesi-Impiombato A."/>
            <person name="Apweiler R."/>
            <person name="Aturaliya R.N."/>
            <person name="Bailey T.L."/>
            <person name="Bansal M."/>
            <person name="Baxter L."/>
            <person name="Beisel K.W."/>
            <person name="Bersano T."/>
            <person name="Bono H."/>
            <person name="Chalk A.M."/>
            <person name="Chiu K.P."/>
            <person name="Choudhary V."/>
            <person name="Christoffels A."/>
            <person name="Clutterbuck D.R."/>
            <person name="Crowe M.L."/>
            <person name="Dalla E."/>
            <person name="Dalrymple B.P."/>
            <person name="de Bono B."/>
            <person name="Della Gatta G."/>
            <person name="di Bernardo D."/>
            <person name="Down T."/>
            <person name="Engstrom P."/>
            <person name="Fagiolini M."/>
            <person name="Faulkner G."/>
            <person name="Fletcher C.F."/>
            <person name="Fukushima T."/>
            <person name="Furuno M."/>
            <person name="Futaki S."/>
            <person name="Gariboldi M."/>
            <person name="Georgii-Hemming P."/>
            <person name="Gingeras T.R."/>
            <person name="Gojobori T."/>
            <person name="Green R.E."/>
            <person name="Gustincich S."/>
            <person name="Harbers M."/>
            <person name="Hayashi Y."/>
            <person name="Hensch T.K."/>
            <person name="Hirokawa N."/>
            <person name="Hill D."/>
            <person name="Huminiecki L."/>
            <person name="Iacono M."/>
            <person name="Ikeo K."/>
            <person name="Iwama A."/>
            <person name="Ishikawa T."/>
            <person name="Jakt M."/>
            <person name="Kanapin A."/>
            <person name="Katoh M."/>
            <person name="Kawasawa Y."/>
            <person name="Kelso J."/>
            <person name="Kitamura H."/>
            <person name="Kitano H."/>
            <person name="Kollias G."/>
            <person name="Krishnan S.P."/>
            <person name="Kruger A."/>
            <person name="Kummerfeld S.K."/>
            <person name="Kurochkin I.V."/>
            <person name="Lareau L.F."/>
            <person name="Lazarevic D."/>
            <person name="Lipovich L."/>
            <person name="Liu J."/>
            <person name="Liuni S."/>
            <person name="McWilliam S."/>
            <person name="Madan Babu M."/>
            <person name="Madera M."/>
            <person name="Marchionni L."/>
            <person name="Matsuda H."/>
            <person name="Matsuzawa S."/>
            <person name="Miki H."/>
            <person name="Mignone F."/>
            <person name="Miyake S."/>
            <person name="Morris K."/>
            <person name="Mottagui-Tabar S."/>
            <person name="Mulder N."/>
            <person name="Nakano N."/>
            <person name="Nakauchi H."/>
            <person name="Ng P."/>
            <person name="Nilsson R."/>
            <person name="Nishiguchi S."/>
            <person name="Nishikawa S."/>
            <person name="Nori F."/>
            <person name="Ohara O."/>
            <person name="Okazaki Y."/>
            <person name="Orlando V."/>
            <person name="Pang K.C."/>
            <person name="Pavan W.J."/>
            <person name="Pavesi G."/>
            <person name="Pesole G."/>
            <person name="Petrovsky N."/>
            <person name="Piazza S."/>
            <person name="Reed J."/>
            <person name="Reid J.F."/>
            <person name="Ring B.Z."/>
            <person name="Ringwald M."/>
            <person name="Rost B."/>
            <person name="Ruan Y."/>
            <person name="Salzberg S.L."/>
            <person name="Sandelin A."/>
            <person name="Schneider C."/>
            <person name="Schoenbach C."/>
            <person name="Sekiguchi K."/>
            <person name="Semple C.A."/>
            <person name="Seno S."/>
            <person name="Sessa L."/>
            <person name="Sheng Y."/>
            <person name="Shibata Y."/>
            <person name="Shimada H."/>
            <person name="Shimada K."/>
            <person name="Silva D."/>
            <person name="Sinclair B."/>
            <person name="Sperling S."/>
            <person name="Stupka E."/>
            <person name="Sugiura K."/>
            <person name="Sultana R."/>
            <person name="Takenaka Y."/>
            <person name="Taki K."/>
            <person name="Tammoja K."/>
            <person name="Tan S.L."/>
            <person name="Tang S."/>
            <person name="Taylor M.S."/>
            <person name="Tegner J."/>
            <person name="Teichmann S.A."/>
            <person name="Ueda H.R."/>
            <person name="van Nimwegen E."/>
            <person name="Verardo R."/>
            <person name="Wei C.L."/>
            <person name="Yagi K."/>
            <person name="Yamanishi H."/>
            <person name="Zabarovsky E."/>
            <person name="Zhu S."/>
            <person name="Zimmer A."/>
            <person name="Hide W."/>
            <person name="Bult C."/>
            <person name="Grimmond S.M."/>
            <person name="Teasdale R.D."/>
            <person name="Liu E.T."/>
            <person name="Brusic V."/>
            <person name="Quackenbush J."/>
            <person name="Wahlestedt C."/>
            <person name="Mattick J.S."/>
            <person name="Hume D.A."/>
            <person name="Kai C."/>
            <person name="Sasaki D."/>
            <person name="Tomaru Y."/>
            <person name="Fukuda S."/>
            <person name="Kanamori-Katayama M."/>
            <person name="Suzuki M."/>
            <person name="Aoki J."/>
            <person name="Arakawa T."/>
            <person name="Iida J."/>
            <person name="Imamura K."/>
            <person name="Itoh M."/>
            <person name="Kato T."/>
            <person name="Kawaji H."/>
            <person name="Kawagashira N."/>
            <person name="Kawashima T."/>
            <person name="Kojima M."/>
            <person name="Kondo S."/>
            <person name="Konno H."/>
            <person name="Nakano K."/>
            <person name="Ninomiya N."/>
            <person name="Nishio T."/>
            <person name="Okada M."/>
            <person name="Plessy C."/>
            <person name="Shibata K."/>
            <person name="Shiraki T."/>
            <person name="Suzuki S."/>
            <person name="Tagami M."/>
            <person name="Waki K."/>
            <person name="Watahiki A."/>
            <person name="Okamura-Oho Y."/>
            <person name="Suzuki H."/>
            <person name="Kawai J."/>
            <person name="Hayashizaki Y."/>
        </authorList>
    </citation>
    <scope>NUCLEOTIDE SEQUENCE [LARGE SCALE MRNA]</scope>
    <source>
        <strain>C57BL/6J</strain>
        <tissue>Testis</tissue>
    </source>
</reference>
<reference key="2">
    <citation type="journal article" date="2004" name="Genome Res.">
        <title>The status, quality, and expansion of the NIH full-length cDNA project: the Mammalian Gene Collection (MGC).</title>
        <authorList>
            <consortium name="The MGC Project Team"/>
        </authorList>
    </citation>
    <scope>NUCLEOTIDE SEQUENCE [LARGE SCALE MRNA]</scope>
    <source>
        <tissue>Brain</tissue>
    </source>
</reference>
<protein>
    <recommendedName>
        <fullName>NADP-dependent oxidoreductase domain-containing protein 1</fullName>
        <ecNumber>1.-.-.-</ecNumber>
    </recommendedName>
    <alternativeName>
        <fullName>Pyrroline-5-carboxylate reductase-like protein C14orf148 homolog</fullName>
    </alternativeName>
</protein>
<accession>Q9D3S5</accession>
<gene>
    <name type="primary">Noxred1</name>
</gene>
<proteinExistence type="evidence at transcript level"/>
<feature type="chain" id="PRO_0000280280" description="NADP-dependent oxidoreductase domain-containing protein 1">
    <location>
        <begin position="1"/>
        <end position="366"/>
    </location>
</feature>
<dbReference type="EC" id="1.-.-.-"/>
<dbReference type="EMBL" id="AK017096">
    <property type="protein sequence ID" value="BAB30594.1"/>
    <property type="molecule type" value="mRNA"/>
</dbReference>
<dbReference type="EMBL" id="BC125331">
    <property type="protein sequence ID" value="AAI25332.1"/>
    <property type="molecule type" value="mRNA"/>
</dbReference>
<dbReference type="EMBL" id="BC125333">
    <property type="protein sequence ID" value="AAI25334.1"/>
    <property type="molecule type" value="mRNA"/>
</dbReference>
<dbReference type="CCDS" id="CCDS36502.1"/>
<dbReference type="RefSeq" id="NP_082020.1">
    <property type="nucleotide sequence ID" value="NM_027744.1"/>
</dbReference>
<dbReference type="SMR" id="Q9D3S5"/>
<dbReference type="STRING" id="10090.ENSMUSP00000152486"/>
<dbReference type="iPTMnet" id="Q9D3S5"/>
<dbReference type="PhosphoSitePlus" id="Q9D3S5"/>
<dbReference type="PaxDb" id="10090-ENSMUSP00000021423"/>
<dbReference type="ProteomicsDB" id="287866"/>
<dbReference type="Antibodypedia" id="54657">
    <property type="antibodies" value="31 antibodies from 12 providers"/>
</dbReference>
<dbReference type="Ensembl" id="ENSMUST00000021423.8">
    <property type="protein sequence ID" value="ENSMUSP00000021423.8"/>
    <property type="gene ID" value="ENSMUSG00000072919.5"/>
</dbReference>
<dbReference type="Ensembl" id="ENSMUST00000222480.2">
    <property type="protein sequence ID" value="ENSMUSP00000152486.2"/>
    <property type="gene ID" value="ENSMUSG00000072919.5"/>
</dbReference>
<dbReference type="GeneID" id="71275"/>
<dbReference type="KEGG" id="mmu:71275"/>
<dbReference type="UCSC" id="uc007oio.1">
    <property type="organism name" value="mouse"/>
</dbReference>
<dbReference type="AGR" id="MGI:1918525"/>
<dbReference type="CTD" id="122945"/>
<dbReference type="MGI" id="MGI:1918525">
    <property type="gene designation" value="Noxred1"/>
</dbReference>
<dbReference type="VEuPathDB" id="HostDB:ENSMUSG00000072919"/>
<dbReference type="eggNOG" id="KOG3124">
    <property type="taxonomic scope" value="Eukaryota"/>
</dbReference>
<dbReference type="GeneTree" id="ENSGT00950000183044"/>
<dbReference type="HOGENOM" id="CLU_075978_0_0_1"/>
<dbReference type="InParanoid" id="Q9D3S5"/>
<dbReference type="OMA" id="YCDSFGI"/>
<dbReference type="OrthoDB" id="195672at2759"/>
<dbReference type="PhylomeDB" id="Q9D3S5"/>
<dbReference type="TreeFam" id="TF335538"/>
<dbReference type="BioGRID-ORCS" id="71275">
    <property type="hits" value="4 hits in 76 CRISPR screens"/>
</dbReference>
<dbReference type="PRO" id="PR:Q9D3S5"/>
<dbReference type="Proteomes" id="UP000000589">
    <property type="component" value="Chromosome 12"/>
</dbReference>
<dbReference type="RNAct" id="Q9D3S5">
    <property type="molecule type" value="protein"/>
</dbReference>
<dbReference type="Bgee" id="ENSMUSG00000072919">
    <property type="expression patterns" value="Expressed in seminiferous tubule of testis and 68 other cell types or tissues"/>
</dbReference>
<dbReference type="ExpressionAtlas" id="Q9D3S5">
    <property type="expression patterns" value="baseline and differential"/>
</dbReference>
<dbReference type="GO" id="GO:0016491">
    <property type="term" value="F:oxidoreductase activity"/>
    <property type="evidence" value="ECO:0007669"/>
    <property type="project" value="UniProtKB-KW"/>
</dbReference>
<dbReference type="FunFam" id="3.40.50.720:FF:000447">
    <property type="entry name" value="NADP dependent oxidoreductase domain containing 1"/>
    <property type="match status" value="1"/>
</dbReference>
<dbReference type="Gene3D" id="3.40.50.720">
    <property type="entry name" value="NAD(P)-binding Rossmann-like Domain"/>
    <property type="match status" value="1"/>
</dbReference>
<dbReference type="InterPro" id="IPR036291">
    <property type="entry name" value="NAD(P)-bd_dom_sf"/>
</dbReference>
<dbReference type="InterPro" id="IPR028939">
    <property type="entry name" value="P5C_Rdtase_cat_N"/>
</dbReference>
<dbReference type="PANTHER" id="PTHR11645:SF58">
    <property type="entry name" value="NADP-DEPENDENT OXIDOREDUCTASE DOMAIN-CONTAINING PROTEIN 1"/>
    <property type="match status" value="1"/>
</dbReference>
<dbReference type="PANTHER" id="PTHR11645">
    <property type="entry name" value="PYRROLINE-5-CARBOXYLATE REDUCTASE"/>
    <property type="match status" value="1"/>
</dbReference>
<dbReference type="Pfam" id="PF03807">
    <property type="entry name" value="F420_oxidored"/>
    <property type="match status" value="1"/>
</dbReference>
<dbReference type="SUPFAM" id="SSF51735">
    <property type="entry name" value="NAD(P)-binding Rossmann-fold domains"/>
    <property type="match status" value="1"/>
</dbReference>
<organism>
    <name type="scientific">Mus musculus</name>
    <name type="common">Mouse</name>
    <dbReference type="NCBI Taxonomy" id="10090"/>
    <lineage>
        <taxon>Eukaryota</taxon>
        <taxon>Metazoa</taxon>
        <taxon>Chordata</taxon>
        <taxon>Craniata</taxon>
        <taxon>Vertebrata</taxon>
        <taxon>Euteleostomi</taxon>
        <taxon>Mammalia</taxon>
        <taxon>Eutheria</taxon>
        <taxon>Euarchontoglires</taxon>
        <taxon>Glires</taxon>
        <taxon>Rodentia</taxon>
        <taxon>Myomorpha</taxon>
        <taxon>Muroidea</taxon>
        <taxon>Muridae</taxon>
        <taxon>Murinae</taxon>
        <taxon>Mus</taxon>
        <taxon>Mus</taxon>
    </lineage>
</organism>
<name>NXRD1_MOUSE</name>
<comment type="function">
    <text evidence="1">Probable oxidoreductase.</text>
</comment>
<comment type="similarity">
    <text evidence="2">Belongs to the pyrroline-5-carboxylate reductase family.</text>
</comment>
<evidence type="ECO:0000250" key="1"/>
<evidence type="ECO:0000305" key="2"/>
<sequence>MEMLEDLESLRFEFGIPEEERYWLYLQGRYRGLMIKGCAHAAFFCKMFSTLSNLLQNLPRTIHPRTVSFDNAATEDELLTVGIIGCGHLGKQLTNVLLKTVPIPAENLQISTRRPESLGELRKLGVRCVYDNAAVASWAKVLFLCCLPAQLPNICLEIQSKLNKHCTVYSFVSAIPLPRLKSLLNHTNILRPQYQFAEDYDNIWGENEEVPIALQDTTIIRGTCPYNNLGGVILNVKWIEGLCYALINACTSRSVFHSQVLKLLNKLLLPMHLESCTTDPESCPQFNLTDFMSKSYVKNLYQKRPFPWFDLTTVQLKETPFSQHISATPSLQDHISLLYCEVFGLTISEEELPYISTVIRPLVEEK</sequence>